<sequence>MTAFTDSITHAHSPSPLTKGTPLALDAITKHYGHRTVLNDVQLRIPSGQFVAIVGRSGCGKSTLLRLLAGLEAASSGELLTGTAPLSSAKDDTRLMFQEARLLPWKKVIDNVGLGLRGNWREKAQDALTSVGLADRANDWPAALSGGQKQRVALARALIHHPRLLLLDEPLGALDALTRIEMQSLIENIWLQHGFTVLLVTHDVSEAIALADRVILIEEGRVGLDITVDLPRPRRRGSAKLAELEARVLERVLAPTSSPLPQQAAI</sequence>
<reference key="1">
    <citation type="journal article" date="2004" name="Proc. Natl. Acad. Sci. U.S.A.">
        <title>Genome sequence of the enterobacterial phytopathogen Erwinia carotovora subsp. atroseptica and characterization of virulence factors.</title>
        <authorList>
            <person name="Bell K.S."/>
            <person name="Sebaihia M."/>
            <person name="Pritchard L."/>
            <person name="Holden M.T.G."/>
            <person name="Hyman L.J."/>
            <person name="Holeva M.C."/>
            <person name="Thomson N.R."/>
            <person name="Bentley S.D."/>
            <person name="Churcher L.J.C."/>
            <person name="Mungall K."/>
            <person name="Atkin R."/>
            <person name="Bason N."/>
            <person name="Brooks K."/>
            <person name="Chillingworth T."/>
            <person name="Clark K."/>
            <person name="Doggett J."/>
            <person name="Fraser A."/>
            <person name="Hance Z."/>
            <person name="Hauser H."/>
            <person name="Jagels K."/>
            <person name="Moule S."/>
            <person name="Norbertczak H."/>
            <person name="Ormond D."/>
            <person name="Price C."/>
            <person name="Quail M.A."/>
            <person name="Sanders M."/>
            <person name="Walker D."/>
            <person name="Whitehead S."/>
            <person name="Salmond G.P.C."/>
            <person name="Birch P.R.J."/>
            <person name="Parkhill J."/>
            <person name="Toth I.K."/>
        </authorList>
    </citation>
    <scope>NUCLEOTIDE SEQUENCE [LARGE SCALE GENOMIC DNA]</scope>
    <source>
        <strain>SCRI 1043 / ATCC BAA-672</strain>
    </source>
</reference>
<gene>
    <name evidence="1" type="primary">ssuB</name>
    <name type="ordered locus">ECA4413</name>
</gene>
<name>SSUB_PECAS</name>
<accession>Q6CYU2</accession>
<protein>
    <recommendedName>
        <fullName evidence="1">Aliphatic sulfonates import ATP-binding protein SsuB</fullName>
        <ecNumber evidence="1">7.6.2.14</ecNumber>
    </recommendedName>
</protein>
<organism>
    <name type="scientific">Pectobacterium atrosepticum (strain SCRI 1043 / ATCC BAA-672)</name>
    <name type="common">Erwinia carotovora subsp. atroseptica</name>
    <dbReference type="NCBI Taxonomy" id="218491"/>
    <lineage>
        <taxon>Bacteria</taxon>
        <taxon>Pseudomonadati</taxon>
        <taxon>Pseudomonadota</taxon>
        <taxon>Gammaproteobacteria</taxon>
        <taxon>Enterobacterales</taxon>
        <taxon>Pectobacteriaceae</taxon>
        <taxon>Pectobacterium</taxon>
    </lineage>
</organism>
<comment type="function">
    <text evidence="1">Part of the ABC transporter complex SsuABC involved in aliphatic sulfonates import. Responsible for energy coupling to the transport system.</text>
</comment>
<comment type="catalytic activity">
    <reaction evidence="1">
        <text>ATP + H2O + aliphatic sulfonate-[sulfonate-binding protein]Side 1 = ADP + phosphate + aliphatic sulfonateSide 2 + [sulfonate-binding protein]Side 1.</text>
        <dbReference type="EC" id="7.6.2.14"/>
    </reaction>
</comment>
<comment type="subunit">
    <text evidence="1">The complex is composed of two ATP-binding proteins (SsuB), two transmembrane proteins (SsuC) and a solute-binding protein (SsuA).</text>
</comment>
<comment type="subcellular location">
    <subcellularLocation>
        <location evidence="1">Cell inner membrane</location>
        <topology evidence="1">Peripheral membrane protein</topology>
    </subcellularLocation>
</comment>
<comment type="similarity">
    <text evidence="1">Belongs to the ABC transporter superfamily. Aliphatic sulfonates importer (TC 3.A.1.17.2) family.</text>
</comment>
<dbReference type="EC" id="7.6.2.14" evidence="1"/>
<dbReference type="EMBL" id="BX950851">
    <property type="protein sequence ID" value="CAG77309.1"/>
    <property type="molecule type" value="Genomic_DNA"/>
</dbReference>
<dbReference type="RefSeq" id="WP_011095873.1">
    <property type="nucleotide sequence ID" value="NC_004547.2"/>
</dbReference>
<dbReference type="SMR" id="Q6CYU2"/>
<dbReference type="STRING" id="218491.ECA4413"/>
<dbReference type="KEGG" id="eca:ECA4413"/>
<dbReference type="eggNOG" id="COG1116">
    <property type="taxonomic scope" value="Bacteria"/>
</dbReference>
<dbReference type="HOGENOM" id="CLU_000604_1_22_6"/>
<dbReference type="OrthoDB" id="9802264at2"/>
<dbReference type="Proteomes" id="UP000007966">
    <property type="component" value="Chromosome"/>
</dbReference>
<dbReference type="GO" id="GO:0005886">
    <property type="term" value="C:plasma membrane"/>
    <property type="evidence" value="ECO:0007669"/>
    <property type="project" value="UniProtKB-SubCell"/>
</dbReference>
<dbReference type="GO" id="GO:0005524">
    <property type="term" value="F:ATP binding"/>
    <property type="evidence" value="ECO:0007669"/>
    <property type="project" value="UniProtKB-KW"/>
</dbReference>
<dbReference type="GO" id="GO:0016887">
    <property type="term" value="F:ATP hydrolysis activity"/>
    <property type="evidence" value="ECO:0007669"/>
    <property type="project" value="InterPro"/>
</dbReference>
<dbReference type="CDD" id="cd03293">
    <property type="entry name" value="ABC_NrtD_SsuB_transporters"/>
    <property type="match status" value="1"/>
</dbReference>
<dbReference type="FunFam" id="3.40.50.300:FF:000653">
    <property type="entry name" value="Aliphatic sulfonates import ATP-binding protein SsuB"/>
    <property type="match status" value="1"/>
</dbReference>
<dbReference type="Gene3D" id="3.40.50.300">
    <property type="entry name" value="P-loop containing nucleotide triphosphate hydrolases"/>
    <property type="match status" value="1"/>
</dbReference>
<dbReference type="InterPro" id="IPR003593">
    <property type="entry name" value="AAA+_ATPase"/>
</dbReference>
<dbReference type="InterPro" id="IPR003439">
    <property type="entry name" value="ABC_transporter-like_ATP-bd"/>
</dbReference>
<dbReference type="InterPro" id="IPR017871">
    <property type="entry name" value="ABC_transporter-like_CS"/>
</dbReference>
<dbReference type="InterPro" id="IPR050166">
    <property type="entry name" value="ABC_transporter_ATP-bind"/>
</dbReference>
<dbReference type="InterPro" id="IPR027417">
    <property type="entry name" value="P-loop_NTPase"/>
</dbReference>
<dbReference type="NCBIfam" id="NF008420">
    <property type="entry name" value="PRK11247.1"/>
    <property type="match status" value="1"/>
</dbReference>
<dbReference type="PANTHER" id="PTHR42788:SF17">
    <property type="entry name" value="ALIPHATIC SULFONATES IMPORT ATP-BINDING PROTEIN SSUB"/>
    <property type="match status" value="1"/>
</dbReference>
<dbReference type="PANTHER" id="PTHR42788">
    <property type="entry name" value="TAURINE IMPORT ATP-BINDING PROTEIN-RELATED"/>
    <property type="match status" value="1"/>
</dbReference>
<dbReference type="Pfam" id="PF00005">
    <property type="entry name" value="ABC_tran"/>
    <property type="match status" value="1"/>
</dbReference>
<dbReference type="SMART" id="SM00382">
    <property type="entry name" value="AAA"/>
    <property type="match status" value="1"/>
</dbReference>
<dbReference type="SUPFAM" id="SSF52540">
    <property type="entry name" value="P-loop containing nucleoside triphosphate hydrolases"/>
    <property type="match status" value="1"/>
</dbReference>
<dbReference type="PROSITE" id="PS00211">
    <property type="entry name" value="ABC_TRANSPORTER_1"/>
    <property type="match status" value="1"/>
</dbReference>
<dbReference type="PROSITE" id="PS50893">
    <property type="entry name" value="ABC_TRANSPORTER_2"/>
    <property type="match status" value="1"/>
</dbReference>
<dbReference type="PROSITE" id="PS51291">
    <property type="entry name" value="SSUB"/>
    <property type="match status" value="1"/>
</dbReference>
<proteinExistence type="inferred from homology"/>
<keyword id="KW-0067">ATP-binding</keyword>
<keyword id="KW-0997">Cell inner membrane</keyword>
<keyword id="KW-1003">Cell membrane</keyword>
<keyword id="KW-0472">Membrane</keyword>
<keyword id="KW-0547">Nucleotide-binding</keyword>
<keyword id="KW-1185">Reference proteome</keyword>
<keyword id="KW-1278">Translocase</keyword>
<keyword id="KW-0813">Transport</keyword>
<feature type="chain" id="PRO_0000279911" description="Aliphatic sulfonates import ATP-binding protein SsuB">
    <location>
        <begin position="1"/>
        <end position="266"/>
    </location>
</feature>
<feature type="domain" description="ABC transporter" evidence="1">
    <location>
        <begin position="23"/>
        <end position="244"/>
    </location>
</feature>
<feature type="binding site" evidence="1">
    <location>
        <begin position="55"/>
        <end position="62"/>
    </location>
    <ligand>
        <name>ATP</name>
        <dbReference type="ChEBI" id="CHEBI:30616"/>
    </ligand>
</feature>
<evidence type="ECO:0000255" key="1">
    <source>
        <dbReference type="HAMAP-Rule" id="MF_01724"/>
    </source>
</evidence>